<dbReference type="EC" id="1.18.1.2" evidence="1"/>
<dbReference type="EMBL" id="BA000026">
    <property type="protein sequence ID" value="BAC43930.1"/>
    <property type="molecule type" value="Genomic_DNA"/>
</dbReference>
<dbReference type="RefSeq" id="WP_011076966.1">
    <property type="nucleotide sequence ID" value="NC_004432.1"/>
</dbReference>
<dbReference type="SMR" id="Q8EWR4"/>
<dbReference type="FunCoup" id="Q8EWR4">
    <property type="interactions" value="12"/>
</dbReference>
<dbReference type="STRING" id="272633.gene:10731238"/>
<dbReference type="KEGG" id="mpe:MYPE1390"/>
<dbReference type="eggNOG" id="COG0492">
    <property type="taxonomic scope" value="Bacteria"/>
</dbReference>
<dbReference type="HOGENOM" id="CLU_031864_5_5_14"/>
<dbReference type="InParanoid" id="Q8EWR4"/>
<dbReference type="Proteomes" id="UP000002522">
    <property type="component" value="Chromosome"/>
</dbReference>
<dbReference type="GO" id="GO:0004324">
    <property type="term" value="F:ferredoxin-NADP+ reductase activity"/>
    <property type="evidence" value="ECO:0007669"/>
    <property type="project" value="UniProtKB-UniRule"/>
</dbReference>
<dbReference type="GO" id="GO:0050660">
    <property type="term" value="F:flavin adenine dinucleotide binding"/>
    <property type="evidence" value="ECO:0007669"/>
    <property type="project" value="UniProtKB-UniRule"/>
</dbReference>
<dbReference type="GO" id="GO:0050661">
    <property type="term" value="F:NADP binding"/>
    <property type="evidence" value="ECO:0007669"/>
    <property type="project" value="UniProtKB-UniRule"/>
</dbReference>
<dbReference type="Gene3D" id="3.50.50.60">
    <property type="entry name" value="FAD/NAD(P)-binding domain"/>
    <property type="match status" value="2"/>
</dbReference>
<dbReference type="HAMAP" id="MF_01685">
    <property type="entry name" value="FENR2"/>
    <property type="match status" value="1"/>
</dbReference>
<dbReference type="InterPro" id="IPR036188">
    <property type="entry name" value="FAD/NAD-bd_sf"/>
</dbReference>
<dbReference type="InterPro" id="IPR023753">
    <property type="entry name" value="FAD/NAD-binding_dom"/>
</dbReference>
<dbReference type="InterPro" id="IPR022890">
    <property type="entry name" value="Fd--NADP_Rdtase_type_2"/>
</dbReference>
<dbReference type="InterPro" id="IPR050097">
    <property type="entry name" value="Ferredoxin-NADP_redctase_2"/>
</dbReference>
<dbReference type="PANTHER" id="PTHR48105">
    <property type="entry name" value="THIOREDOXIN REDUCTASE 1-RELATED-RELATED"/>
    <property type="match status" value="1"/>
</dbReference>
<dbReference type="Pfam" id="PF07992">
    <property type="entry name" value="Pyr_redox_2"/>
    <property type="match status" value="1"/>
</dbReference>
<dbReference type="PRINTS" id="PR00368">
    <property type="entry name" value="FADPNR"/>
</dbReference>
<dbReference type="PRINTS" id="PR00469">
    <property type="entry name" value="PNDRDTASEII"/>
</dbReference>
<dbReference type="SUPFAM" id="SSF51905">
    <property type="entry name" value="FAD/NAD(P)-binding domain"/>
    <property type="match status" value="1"/>
</dbReference>
<organism>
    <name type="scientific">Malacoplasma penetrans (strain HF-2)</name>
    <name type="common">Mycoplasma penetrans</name>
    <dbReference type="NCBI Taxonomy" id="272633"/>
    <lineage>
        <taxon>Bacteria</taxon>
        <taxon>Bacillati</taxon>
        <taxon>Mycoplasmatota</taxon>
        <taxon>Mycoplasmoidales</taxon>
        <taxon>Mycoplasmoidaceae</taxon>
        <taxon>Malacoplasma</taxon>
    </lineage>
</organism>
<name>FENR_MALP2</name>
<proteinExistence type="inferred from homology"/>
<evidence type="ECO:0000255" key="1">
    <source>
        <dbReference type="HAMAP-Rule" id="MF_01685"/>
    </source>
</evidence>
<comment type="catalytic activity">
    <reaction evidence="1">
        <text>2 reduced [2Fe-2S]-[ferredoxin] + NADP(+) + H(+) = 2 oxidized [2Fe-2S]-[ferredoxin] + NADPH</text>
        <dbReference type="Rhea" id="RHEA:20125"/>
        <dbReference type="Rhea" id="RHEA-COMP:10000"/>
        <dbReference type="Rhea" id="RHEA-COMP:10001"/>
        <dbReference type="ChEBI" id="CHEBI:15378"/>
        <dbReference type="ChEBI" id="CHEBI:33737"/>
        <dbReference type="ChEBI" id="CHEBI:33738"/>
        <dbReference type="ChEBI" id="CHEBI:57783"/>
        <dbReference type="ChEBI" id="CHEBI:58349"/>
        <dbReference type="EC" id="1.18.1.2"/>
    </reaction>
</comment>
<comment type="cofactor">
    <cofactor evidence="1">
        <name>FAD</name>
        <dbReference type="ChEBI" id="CHEBI:57692"/>
    </cofactor>
    <text evidence="1">Binds 1 FAD per subunit.</text>
</comment>
<comment type="subunit">
    <text evidence="1">Homodimer.</text>
</comment>
<comment type="similarity">
    <text evidence="1">Belongs to the ferredoxin--NADP reductase type 2 family.</text>
</comment>
<gene>
    <name type="ordered locus">MYPE1390</name>
</gene>
<accession>Q8EWR4</accession>
<feature type="chain" id="PRO_0000364883" description="Ferredoxin--NADP reductase">
    <location>
        <begin position="1"/>
        <end position="322"/>
    </location>
</feature>
<feature type="binding site" evidence="1">
    <location>
        <position position="37"/>
    </location>
    <ligand>
        <name>FAD</name>
        <dbReference type="ChEBI" id="CHEBI:57692"/>
    </ligand>
</feature>
<feature type="binding site" evidence="1">
    <location>
        <position position="45"/>
    </location>
    <ligand>
        <name>FAD</name>
        <dbReference type="ChEBI" id="CHEBI:57692"/>
    </ligand>
</feature>
<feature type="binding site" evidence="1">
    <location>
        <position position="50"/>
    </location>
    <ligand>
        <name>FAD</name>
        <dbReference type="ChEBI" id="CHEBI:57692"/>
    </ligand>
</feature>
<feature type="binding site" evidence="1">
    <location>
        <position position="91"/>
    </location>
    <ligand>
        <name>FAD</name>
        <dbReference type="ChEBI" id="CHEBI:57692"/>
    </ligand>
</feature>
<feature type="binding site" evidence="1">
    <location>
        <position position="128"/>
    </location>
    <ligand>
        <name>FAD</name>
        <dbReference type="ChEBI" id="CHEBI:57692"/>
    </ligand>
</feature>
<feature type="binding site" evidence="1">
    <location>
        <position position="290"/>
    </location>
    <ligand>
        <name>FAD</name>
        <dbReference type="ChEBI" id="CHEBI:57692"/>
    </ligand>
</feature>
<reference key="1">
    <citation type="journal article" date="2002" name="Nucleic Acids Res.">
        <title>The complete genomic sequence of Mycoplasma penetrans, an intracellular bacterial pathogen in humans.</title>
        <authorList>
            <person name="Sasaki Y."/>
            <person name="Ishikawa J."/>
            <person name="Yamashita A."/>
            <person name="Oshima K."/>
            <person name="Kenri T."/>
            <person name="Furuya K."/>
            <person name="Yoshino C."/>
            <person name="Horino A."/>
            <person name="Shiba T."/>
            <person name="Sasaki T."/>
            <person name="Hattori M."/>
        </authorList>
    </citation>
    <scope>NUCLEOTIDE SEQUENCE [LARGE SCALE GENOMIC DNA]</scope>
    <source>
        <strain>HF-2</strain>
    </source>
</reference>
<keyword id="KW-0274">FAD</keyword>
<keyword id="KW-0285">Flavoprotein</keyword>
<keyword id="KW-0521">NADP</keyword>
<keyword id="KW-0560">Oxidoreductase</keyword>
<keyword id="KW-1185">Reference proteome</keyword>
<protein>
    <recommendedName>
        <fullName evidence="1">Ferredoxin--NADP reductase</fullName>
        <shortName evidence="1">FNR</shortName>
        <shortName evidence="1">Fd-NADP(+) reductase</shortName>
        <ecNumber evidence="1">1.18.1.2</ecNumber>
    </recommendedName>
</protein>
<sequence length="322" mass="37129">MNEDLRIYDVAIVGGGAGGIFASTISNYFNLNSILIEKKSYLGGQPMELYPNKFIYDFPCFFEIKSSDVIKKLIQQNKEQKNSNIQLDTDILNITWQTINEQELFLFETNKNSFYAKKIILASGNGSFNPRKLEINNEPIDSPFIHYSLNLETEIYKNKKILVLGGGDSAVEWANYFVEEKITNNVAIIHRRNEYRSSSFMIDCLSKNNILQKLNYEIIDFNESNKTLTIKHKETEKEQTLPFDYVLVQYGQISSPINIELLNQINKEKGKYVIDLNQKTNIKNIYAIGDATHFYCKPNTIITACAEAVRALWHISKNKKDW</sequence>